<feature type="chain" id="PRO_0000310367" description="Uncharacterized membrane protein C977.17">
    <location>
        <begin position="1"/>
        <end position="598"/>
    </location>
</feature>
<feature type="topological domain" description="Cytoplasmic" evidence="1">
    <location>
        <begin position="1"/>
        <end position="313"/>
    </location>
</feature>
<feature type="transmembrane region" description="Helical" evidence="1">
    <location>
        <begin position="314"/>
        <end position="334"/>
    </location>
</feature>
<feature type="topological domain" description="Extracellular" evidence="1">
    <location>
        <begin position="335"/>
        <end position="346"/>
    </location>
</feature>
<feature type="transmembrane region" description="Helical" evidence="1">
    <location>
        <begin position="347"/>
        <end position="367"/>
    </location>
</feature>
<feature type="topological domain" description="Cytoplasmic" evidence="1">
    <location>
        <begin position="368"/>
        <end position="388"/>
    </location>
</feature>
<feature type="transmembrane region" description="Helical" evidence="1">
    <location>
        <begin position="389"/>
        <end position="409"/>
    </location>
</feature>
<feature type="topological domain" description="Extracellular" evidence="1">
    <location>
        <begin position="410"/>
        <end position="444"/>
    </location>
</feature>
<feature type="transmembrane region" description="Helical" evidence="1">
    <location>
        <begin position="445"/>
        <end position="465"/>
    </location>
</feature>
<feature type="topological domain" description="Cytoplasmic" evidence="1">
    <location>
        <begin position="466"/>
        <end position="473"/>
    </location>
</feature>
<feature type="transmembrane region" description="Helical" evidence="1">
    <location>
        <begin position="474"/>
        <end position="494"/>
    </location>
</feature>
<feature type="topological domain" description="Extracellular" evidence="1">
    <location>
        <begin position="495"/>
        <end position="532"/>
    </location>
</feature>
<feature type="transmembrane region" description="Helical" evidence="1">
    <location>
        <begin position="533"/>
        <end position="553"/>
    </location>
</feature>
<feature type="topological domain" description="Cytoplasmic" evidence="1">
    <location>
        <begin position="554"/>
        <end position="598"/>
    </location>
</feature>
<feature type="region of interest" description="Disordered" evidence="2">
    <location>
        <begin position="1"/>
        <end position="54"/>
    </location>
</feature>
<feature type="region of interest" description="Disordered" evidence="2">
    <location>
        <begin position="139"/>
        <end position="176"/>
    </location>
</feature>
<feature type="region of interest" description="Disordered" evidence="2">
    <location>
        <begin position="194"/>
        <end position="279"/>
    </location>
</feature>
<feature type="short sequence motif" description="NPA 1">
    <location>
        <begin position="371"/>
        <end position="373"/>
    </location>
</feature>
<feature type="short sequence motif" description="NPA 2">
    <location>
        <begin position="501"/>
        <end position="503"/>
    </location>
</feature>
<feature type="compositionally biased region" description="Low complexity" evidence="2">
    <location>
        <begin position="1"/>
        <end position="19"/>
    </location>
</feature>
<feature type="compositionally biased region" description="Polar residues" evidence="2">
    <location>
        <begin position="30"/>
        <end position="48"/>
    </location>
</feature>
<feature type="compositionally biased region" description="Low complexity" evidence="2">
    <location>
        <begin position="147"/>
        <end position="165"/>
    </location>
</feature>
<feature type="compositionally biased region" description="Polar residues" evidence="2">
    <location>
        <begin position="218"/>
        <end position="242"/>
    </location>
</feature>
<feature type="compositionally biased region" description="Polar residues" evidence="2">
    <location>
        <begin position="255"/>
        <end position="276"/>
    </location>
</feature>
<protein>
    <recommendedName>
        <fullName>Uncharacterized membrane protein C977.17</fullName>
    </recommendedName>
</protein>
<dbReference type="EMBL" id="CU329670">
    <property type="protein sequence ID" value="CAB69639.1"/>
    <property type="molecule type" value="Genomic_DNA"/>
</dbReference>
<dbReference type="PIR" id="T50288">
    <property type="entry name" value="T50288"/>
</dbReference>
<dbReference type="RefSeq" id="NP_592788.1">
    <property type="nucleotide sequence ID" value="NM_001018188.2"/>
</dbReference>
<dbReference type="SMR" id="Q9P7T9"/>
<dbReference type="BioGRID" id="279726">
    <property type="interactions" value="41"/>
</dbReference>
<dbReference type="FunCoup" id="Q9P7T9">
    <property type="interactions" value="65"/>
</dbReference>
<dbReference type="STRING" id="284812.Q9P7T9"/>
<dbReference type="iPTMnet" id="Q9P7T9"/>
<dbReference type="PaxDb" id="4896-SPAC977.17.1"/>
<dbReference type="EnsemblFungi" id="SPAC977.17.1">
    <property type="protein sequence ID" value="SPAC977.17.1:pep"/>
    <property type="gene ID" value="SPAC977.17"/>
</dbReference>
<dbReference type="KEGG" id="spo:2543301"/>
<dbReference type="PomBase" id="SPAC977.17"/>
<dbReference type="VEuPathDB" id="FungiDB:SPAC977.17"/>
<dbReference type="eggNOG" id="KOG0224">
    <property type="taxonomic scope" value="Eukaryota"/>
</dbReference>
<dbReference type="HOGENOM" id="CLU_020019_2_1_1"/>
<dbReference type="InParanoid" id="Q9P7T9"/>
<dbReference type="OMA" id="NPAYEQP"/>
<dbReference type="PhylomeDB" id="Q9P7T9"/>
<dbReference type="Reactome" id="R-SPO-432030">
    <property type="pathway name" value="Transport of glycerol from adipocytes to the liver by Aquaporins"/>
</dbReference>
<dbReference type="Reactome" id="R-SPO-432040">
    <property type="pathway name" value="Vasopressin regulates renal water homeostasis via Aquaporins"/>
</dbReference>
<dbReference type="Reactome" id="R-SPO-432047">
    <property type="pathway name" value="Passive transport by Aquaporins"/>
</dbReference>
<dbReference type="PRO" id="PR:Q9P7T9"/>
<dbReference type="Proteomes" id="UP000002485">
    <property type="component" value="Chromosome I"/>
</dbReference>
<dbReference type="GO" id="GO:0005886">
    <property type="term" value="C:plasma membrane"/>
    <property type="evidence" value="ECO:0000318"/>
    <property type="project" value="GO_Central"/>
</dbReference>
<dbReference type="GO" id="GO:0015254">
    <property type="term" value="F:glycerol channel activity"/>
    <property type="evidence" value="ECO:0000318"/>
    <property type="project" value="GO_Central"/>
</dbReference>
<dbReference type="GO" id="GO:0015250">
    <property type="term" value="F:water channel activity"/>
    <property type="evidence" value="ECO:0000318"/>
    <property type="project" value="GO_Central"/>
</dbReference>
<dbReference type="GO" id="GO:0015793">
    <property type="term" value="P:glycerol transmembrane transport"/>
    <property type="evidence" value="ECO:0000318"/>
    <property type="project" value="GO_Central"/>
</dbReference>
<dbReference type="GO" id="GO:0006833">
    <property type="term" value="P:water transport"/>
    <property type="evidence" value="ECO:0000318"/>
    <property type="project" value="GO_Central"/>
</dbReference>
<dbReference type="CDD" id="cd00333">
    <property type="entry name" value="MIP"/>
    <property type="match status" value="1"/>
</dbReference>
<dbReference type="FunFam" id="1.20.1080.10:FF:000022">
    <property type="entry name" value="MIP aquaporin"/>
    <property type="match status" value="1"/>
</dbReference>
<dbReference type="Gene3D" id="1.20.1080.10">
    <property type="entry name" value="Glycerol uptake facilitator protein"/>
    <property type="match status" value="1"/>
</dbReference>
<dbReference type="InterPro" id="IPR023271">
    <property type="entry name" value="Aquaporin-like"/>
</dbReference>
<dbReference type="InterPro" id="IPR000425">
    <property type="entry name" value="MIP"/>
</dbReference>
<dbReference type="InterPro" id="IPR050363">
    <property type="entry name" value="MIP/Aquaporin"/>
</dbReference>
<dbReference type="InterPro" id="IPR022357">
    <property type="entry name" value="MIP_CS"/>
</dbReference>
<dbReference type="NCBIfam" id="TIGR00861">
    <property type="entry name" value="MIP"/>
    <property type="match status" value="1"/>
</dbReference>
<dbReference type="PANTHER" id="PTHR43829">
    <property type="entry name" value="AQUAPORIN OR AQUAGLYCEROPORIN RELATED"/>
    <property type="match status" value="1"/>
</dbReference>
<dbReference type="PANTHER" id="PTHR43829:SF9">
    <property type="entry name" value="AQUAPORIN-9"/>
    <property type="match status" value="1"/>
</dbReference>
<dbReference type="Pfam" id="PF00230">
    <property type="entry name" value="MIP"/>
    <property type="match status" value="1"/>
</dbReference>
<dbReference type="PRINTS" id="PR00783">
    <property type="entry name" value="MINTRINSICP"/>
</dbReference>
<dbReference type="SUPFAM" id="SSF81338">
    <property type="entry name" value="Aquaporin-like"/>
    <property type="match status" value="1"/>
</dbReference>
<dbReference type="PROSITE" id="PS00221">
    <property type="entry name" value="MIP"/>
    <property type="match status" value="1"/>
</dbReference>
<sequence>MSVPLRFSTPSSSPSASDNESVHDDGPTTELDTFNTTDVPRRVNTTKARQMRPKNTLKVAFSSPNLKGLDNTADSDSQPWLGGYLAGRLEDISGQSRRNYVDPYYEELNAGRRPNKPVWSLNGPLPHVLGNSVVEKISQKNQEARSRANSRVNSRANSRANSSVSLAGMDGSPNWKRKMKSAVFGSRVKLNDEEAQLPRNKSSVSIAEQAASRPKVSFSLQSSRQPSIAEEQPQTQRKSSAITVEHAENAEPETPRNNVSFSRKPSIAEQDSSQDITMPPNEIIAEESLDSGSDTETLYLNYWCKIRHFFREGFAEFLGTLVLVVFGVGSNLQATVTNGAGGSFESLSFAWGFGCMLGVYIAGGISGGHVNPAVTISLAIFRKFPWYKVPIYIFFQIWGAFFGGALAYGYHWSSITEFEGGKDIRTPATGGCLYTNPKPYVTWRNAFFDEFIGTAVLVGCLFAILDDTNSPPTQGMTAFIVGLLIAAIGMALGYQTSFTLNPARDLGPRMFAWWIGYGPHSFHLYHWWWTWGAWGGTIGGGIAGGLIYDLVIFTGPESPLNYPDNGFIDKKVHQITAKFEKEEEVENLEKTDSPIENN</sequence>
<reference key="1">
    <citation type="journal article" date="2002" name="Nature">
        <title>The genome sequence of Schizosaccharomyces pombe.</title>
        <authorList>
            <person name="Wood V."/>
            <person name="Gwilliam R."/>
            <person name="Rajandream M.A."/>
            <person name="Lyne M.H."/>
            <person name="Lyne R."/>
            <person name="Stewart A."/>
            <person name="Sgouros J.G."/>
            <person name="Peat N."/>
            <person name="Hayles J."/>
            <person name="Baker S.G."/>
            <person name="Basham D."/>
            <person name="Bowman S."/>
            <person name="Brooks K."/>
            <person name="Brown D."/>
            <person name="Brown S."/>
            <person name="Chillingworth T."/>
            <person name="Churcher C.M."/>
            <person name="Collins M."/>
            <person name="Connor R."/>
            <person name="Cronin A."/>
            <person name="Davis P."/>
            <person name="Feltwell T."/>
            <person name="Fraser A."/>
            <person name="Gentles S."/>
            <person name="Goble A."/>
            <person name="Hamlin N."/>
            <person name="Harris D.E."/>
            <person name="Hidalgo J."/>
            <person name="Hodgson G."/>
            <person name="Holroyd S."/>
            <person name="Hornsby T."/>
            <person name="Howarth S."/>
            <person name="Huckle E.J."/>
            <person name="Hunt S."/>
            <person name="Jagels K."/>
            <person name="James K.D."/>
            <person name="Jones L."/>
            <person name="Jones M."/>
            <person name="Leather S."/>
            <person name="McDonald S."/>
            <person name="McLean J."/>
            <person name="Mooney P."/>
            <person name="Moule S."/>
            <person name="Mungall K.L."/>
            <person name="Murphy L.D."/>
            <person name="Niblett D."/>
            <person name="Odell C."/>
            <person name="Oliver K."/>
            <person name="O'Neil S."/>
            <person name="Pearson D."/>
            <person name="Quail M.A."/>
            <person name="Rabbinowitsch E."/>
            <person name="Rutherford K.M."/>
            <person name="Rutter S."/>
            <person name="Saunders D."/>
            <person name="Seeger K."/>
            <person name="Sharp S."/>
            <person name="Skelton J."/>
            <person name="Simmonds M.N."/>
            <person name="Squares R."/>
            <person name="Squares S."/>
            <person name="Stevens K."/>
            <person name="Taylor K."/>
            <person name="Taylor R.G."/>
            <person name="Tivey A."/>
            <person name="Walsh S.V."/>
            <person name="Warren T."/>
            <person name="Whitehead S."/>
            <person name="Woodward J.R."/>
            <person name="Volckaert G."/>
            <person name="Aert R."/>
            <person name="Robben J."/>
            <person name="Grymonprez B."/>
            <person name="Weltjens I."/>
            <person name="Vanstreels E."/>
            <person name="Rieger M."/>
            <person name="Schaefer M."/>
            <person name="Mueller-Auer S."/>
            <person name="Gabel C."/>
            <person name="Fuchs M."/>
            <person name="Duesterhoeft A."/>
            <person name="Fritzc C."/>
            <person name="Holzer E."/>
            <person name="Moestl D."/>
            <person name="Hilbert H."/>
            <person name="Borzym K."/>
            <person name="Langer I."/>
            <person name="Beck A."/>
            <person name="Lehrach H."/>
            <person name="Reinhardt R."/>
            <person name="Pohl T.M."/>
            <person name="Eger P."/>
            <person name="Zimmermann W."/>
            <person name="Wedler H."/>
            <person name="Wambutt R."/>
            <person name="Purnelle B."/>
            <person name="Goffeau A."/>
            <person name="Cadieu E."/>
            <person name="Dreano S."/>
            <person name="Gloux S."/>
            <person name="Lelaure V."/>
            <person name="Mottier S."/>
            <person name="Galibert F."/>
            <person name="Aves S.J."/>
            <person name="Xiang Z."/>
            <person name="Hunt C."/>
            <person name="Moore K."/>
            <person name="Hurst S.M."/>
            <person name="Lucas M."/>
            <person name="Rochet M."/>
            <person name="Gaillardin C."/>
            <person name="Tallada V.A."/>
            <person name="Garzon A."/>
            <person name="Thode G."/>
            <person name="Daga R.R."/>
            <person name="Cruzado L."/>
            <person name="Jimenez J."/>
            <person name="Sanchez M."/>
            <person name="del Rey F."/>
            <person name="Benito J."/>
            <person name="Dominguez A."/>
            <person name="Revuelta J.L."/>
            <person name="Moreno S."/>
            <person name="Armstrong J."/>
            <person name="Forsburg S.L."/>
            <person name="Cerutti L."/>
            <person name="Lowe T."/>
            <person name="McCombie W.R."/>
            <person name="Paulsen I."/>
            <person name="Potashkin J."/>
            <person name="Shpakovski G.V."/>
            <person name="Ussery D."/>
            <person name="Barrell B.G."/>
            <person name="Nurse P."/>
        </authorList>
    </citation>
    <scope>NUCLEOTIDE SEQUENCE [LARGE SCALE GENOMIC DNA]</scope>
    <source>
        <strain>972 / ATCC 24843</strain>
    </source>
</reference>
<comment type="subcellular location">
    <subcellularLocation>
        <location evidence="3">Membrane</location>
        <topology evidence="3">Multi-pass membrane protein</topology>
    </subcellularLocation>
</comment>
<comment type="domain">
    <text>Aquaporins contain two tandem repeats each containing three membrane-spanning domains and a pore-forming loop with the signature motif Asn-Pro-Ala (NPA).</text>
</comment>
<comment type="similarity">
    <text evidence="3">Belongs to the MIP/aquaporin (TC 1.A.8) family.</text>
</comment>
<keyword id="KW-0472">Membrane</keyword>
<keyword id="KW-1185">Reference proteome</keyword>
<keyword id="KW-0677">Repeat</keyword>
<keyword id="KW-0812">Transmembrane</keyword>
<keyword id="KW-1133">Transmembrane helix</keyword>
<keyword id="KW-0813">Transport</keyword>
<proteinExistence type="inferred from homology"/>
<accession>Q9P7T9</accession>
<evidence type="ECO:0000255" key="1"/>
<evidence type="ECO:0000256" key="2">
    <source>
        <dbReference type="SAM" id="MobiDB-lite"/>
    </source>
</evidence>
<evidence type="ECO:0000305" key="3"/>
<name>YI7H_SCHPO</name>
<organism>
    <name type="scientific">Schizosaccharomyces pombe (strain 972 / ATCC 24843)</name>
    <name type="common">Fission yeast</name>
    <dbReference type="NCBI Taxonomy" id="284812"/>
    <lineage>
        <taxon>Eukaryota</taxon>
        <taxon>Fungi</taxon>
        <taxon>Dikarya</taxon>
        <taxon>Ascomycota</taxon>
        <taxon>Taphrinomycotina</taxon>
        <taxon>Schizosaccharomycetes</taxon>
        <taxon>Schizosaccharomycetales</taxon>
        <taxon>Schizosaccharomycetaceae</taxon>
        <taxon>Schizosaccharomyces</taxon>
    </lineage>
</organism>
<gene>
    <name type="ORF">SPAC977.17</name>
</gene>